<evidence type="ECO:0000305" key="1"/>
<comment type="function">
    <text>Involved in 6-O-carbamoylation of Nod-factors.</text>
</comment>
<comment type="similarity">
    <text evidence="1">Belongs to the NodU/CmcH family.</text>
</comment>
<organism>
    <name type="scientific">Bradyrhizobium diazoefficiens (strain JCM 10833 / BCRC 13528 / IAM 13628 / NBRC 14792 / USDA 110)</name>
    <dbReference type="NCBI Taxonomy" id="224911"/>
    <lineage>
        <taxon>Bacteria</taxon>
        <taxon>Pseudomonadati</taxon>
        <taxon>Pseudomonadota</taxon>
        <taxon>Alphaproteobacteria</taxon>
        <taxon>Hyphomicrobiales</taxon>
        <taxon>Nitrobacteraceae</taxon>
        <taxon>Bradyrhizobium</taxon>
    </lineage>
</organism>
<gene>
    <name type="primary">nodU</name>
    <name type="ordered locus">blr2029</name>
</gene>
<keyword id="KW-0536">Nodulation</keyword>
<keyword id="KW-1185">Reference proteome</keyword>
<keyword id="KW-0808">Transferase</keyword>
<name>NODU_BRADU</name>
<protein>
    <recommendedName>
        <fullName>Nodulation protein U</fullName>
        <ecNumber>2.1.3.-</ecNumber>
    </recommendedName>
</protein>
<feature type="chain" id="PRO_0000207848" description="Nodulation protein U">
    <location>
        <begin position="1"/>
        <end position="569"/>
    </location>
</feature>
<sequence>MRICGIKLTHDGAIAVVEDGRRLFCVEQEKRGNGPRYQSVDNLDAVVFALAEHGLNPRDIDQFVIDGWDGENESQFQLLSGAVPVALKGAPYVERHAEGLLDSVDGYGLLLGGEEFPYKSYPHVTGHVASAYSTSPFASAGKPALCLVWDGCIFPRLYYVEPQGARLIGSLFPMIGHAYAAAGLHFGPYRQPNRSSWDLGIAGKLMAYIELGSVDESIVEVFQGLYETRSAADTEQARRYRENINNAEASLAVIHDFFESSALRLKAKRAEDVLASFHVFLERLLVKEIAMVLLRHSSLPGARNLCIAGGCGLNIKWNSALRATGLFDDVWVPPFPNDSGSAIGAACGAMAAQDGFEPLEWSVYSGPALQESEVPPDWEAAPCSLPELASILADNKPVIFLSGCAGLGPRALGGRSILAAPTSPEMKDHLNDIKRREHFRPVVPICLEDRAPEIFSPGTPDPYMLFDHQTRANWRDKIPAVVHLDGSARLQTISRNSPHKIAALLIEFEQLTGIPLLCTTSANLHGRGFFPDAAAACQWGRVEHVWCEGMLWSKTVIKKSSPTERLLSA</sequence>
<dbReference type="EC" id="2.1.3.-"/>
<dbReference type="EMBL" id="J03685">
    <property type="protein sequence ID" value="AAA26228.1"/>
    <property type="molecule type" value="Genomic_DNA"/>
</dbReference>
<dbReference type="EMBL" id="AH010242">
    <property type="protein sequence ID" value="AAG61000.1"/>
    <property type="molecule type" value="Genomic_DNA"/>
</dbReference>
<dbReference type="EMBL" id="BA000040">
    <property type="protein sequence ID" value="BAC47294.1"/>
    <property type="molecule type" value="Genomic_DNA"/>
</dbReference>
<dbReference type="PIR" id="S27495">
    <property type="entry name" value="S27495"/>
</dbReference>
<dbReference type="RefSeq" id="NP_768669.1">
    <property type="nucleotide sequence ID" value="NC_004463.1"/>
</dbReference>
<dbReference type="RefSeq" id="WP_011084826.1">
    <property type="nucleotide sequence ID" value="NC_004463.1"/>
</dbReference>
<dbReference type="SMR" id="P26027"/>
<dbReference type="STRING" id="224911.AAV28_06980"/>
<dbReference type="EnsemblBacteria" id="BAC47294">
    <property type="protein sequence ID" value="BAC47294"/>
    <property type="gene ID" value="BAC47294"/>
</dbReference>
<dbReference type="GeneID" id="46489121"/>
<dbReference type="KEGG" id="bja:blr2029"/>
<dbReference type="PATRIC" id="fig|224911.44.peg.1530"/>
<dbReference type="eggNOG" id="COG2192">
    <property type="taxonomic scope" value="Bacteria"/>
</dbReference>
<dbReference type="HOGENOM" id="CLU_014411_2_2_5"/>
<dbReference type="InParanoid" id="P26027"/>
<dbReference type="OrthoDB" id="9780777at2"/>
<dbReference type="Proteomes" id="UP000002526">
    <property type="component" value="Chromosome"/>
</dbReference>
<dbReference type="GO" id="GO:0016740">
    <property type="term" value="F:transferase activity"/>
    <property type="evidence" value="ECO:0007669"/>
    <property type="project" value="UniProtKB-KW"/>
</dbReference>
<dbReference type="GO" id="GO:0009058">
    <property type="term" value="P:biosynthetic process"/>
    <property type="evidence" value="ECO:0007669"/>
    <property type="project" value="InterPro"/>
</dbReference>
<dbReference type="CDD" id="cd24101">
    <property type="entry name" value="ASKHA_NBD_NodU_N"/>
    <property type="match status" value="1"/>
</dbReference>
<dbReference type="Gene3D" id="3.30.420.40">
    <property type="match status" value="1"/>
</dbReference>
<dbReference type="Gene3D" id="3.90.870.20">
    <property type="entry name" value="Carbamoyltransferase, C-terminal domain"/>
    <property type="match status" value="1"/>
</dbReference>
<dbReference type="InterPro" id="IPR031730">
    <property type="entry name" value="Carbam_trans_C"/>
</dbReference>
<dbReference type="InterPro" id="IPR038152">
    <property type="entry name" value="Carbam_trans_C_sf"/>
</dbReference>
<dbReference type="InterPro" id="IPR003696">
    <property type="entry name" value="Carbtransf_dom"/>
</dbReference>
<dbReference type="InterPro" id="IPR051338">
    <property type="entry name" value="NodU/CmcH_Carbamoyltrnsfr"/>
</dbReference>
<dbReference type="InterPro" id="IPR048155">
    <property type="entry name" value="Nodul_NodU"/>
</dbReference>
<dbReference type="NCBIfam" id="NF041651">
    <property type="entry name" value="nodul_NodU"/>
    <property type="match status" value="1"/>
</dbReference>
<dbReference type="PANTHER" id="PTHR34847">
    <property type="entry name" value="NODULATION PROTEIN U"/>
    <property type="match status" value="1"/>
</dbReference>
<dbReference type="PANTHER" id="PTHR34847:SF1">
    <property type="entry name" value="NODULATION PROTEIN U"/>
    <property type="match status" value="1"/>
</dbReference>
<dbReference type="Pfam" id="PF16861">
    <property type="entry name" value="Carbam_trans_C"/>
    <property type="match status" value="1"/>
</dbReference>
<dbReference type="Pfam" id="PF02543">
    <property type="entry name" value="Carbam_trans_N"/>
    <property type="match status" value="1"/>
</dbReference>
<proteinExistence type="inferred from homology"/>
<accession>P26027</accession>
<reference key="1">
    <citation type="journal article" date="1990" name="Mol. Plant Microbe Interact.">
        <title>Identification of nodS and nodU, two inducible genes inserted between the Bradyrhizobium japonicum nodYABC and nodIJ genes.</title>
        <authorList>
            <person name="Goettfert M."/>
            <person name="Hitz S."/>
            <person name="Hennecke H."/>
        </authorList>
    </citation>
    <scope>NUCLEOTIDE SEQUENCE [GENOMIC DNA]</scope>
    <source>
        <strain>JCM 10833 / BCRC 13528 / IAM 13628 / NBRC 14792 / USDA 110</strain>
    </source>
</reference>
<reference key="2">
    <citation type="journal article" date="2001" name="J. Bacteriol.">
        <title>Potential symbiosis-specific genes uncovered by sequencing a 410-kb DNA region of the Bradyrhizobium japonicum chromosome.</title>
        <authorList>
            <person name="Goettfert M."/>
            <person name="Roethlisberger S."/>
            <person name="Kuendig C."/>
            <person name="Beck C."/>
            <person name="Marty R."/>
            <person name="Hennecke H."/>
        </authorList>
    </citation>
    <scope>NUCLEOTIDE SEQUENCE [GENOMIC DNA]</scope>
    <source>
        <strain>USDA 110spc4</strain>
    </source>
</reference>
<reference key="3">
    <citation type="journal article" date="2002" name="DNA Res.">
        <title>Complete genomic sequence of nitrogen-fixing symbiotic bacterium Bradyrhizobium japonicum USDA110.</title>
        <authorList>
            <person name="Kaneko T."/>
            <person name="Nakamura Y."/>
            <person name="Sato S."/>
            <person name="Minamisawa K."/>
            <person name="Uchiumi T."/>
            <person name="Sasamoto S."/>
            <person name="Watanabe A."/>
            <person name="Idesawa K."/>
            <person name="Iriguchi M."/>
            <person name="Kawashima K."/>
            <person name="Kohara M."/>
            <person name="Matsumoto M."/>
            <person name="Shimpo S."/>
            <person name="Tsuruoka H."/>
            <person name="Wada T."/>
            <person name="Yamada M."/>
            <person name="Tabata S."/>
        </authorList>
    </citation>
    <scope>NUCLEOTIDE SEQUENCE [LARGE SCALE GENOMIC DNA]</scope>
    <source>
        <strain>JCM 10833 / BCRC 13528 / IAM 13628 / NBRC 14792 / USDA 110</strain>
    </source>
</reference>